<reference key="1">
    <citation type="journal article" date="2003" name="Proc. Natl. Acad. Sci. U.S.A.">
        <title>The complete genome sequence of the carcinogenic bacterium Helicobacter hepaticus.</title>
        <authorList>
            <person name="Suerbaum S."/>
            <person name="Josenhans C."/>
            <person name="Sterzenbach T."/>
            <person name="Drescher B."/>
            <person name="Brandt P."/>
            <person name="Bell M."/>
            <person name="Droege M."/>
            <person name="Fartmann B."/>
            <person name="Fischer H.-P."/>
            <person name="Ge Z."/>
            <person name="Hoerster A."/>
            <person name="Holland R."/>
            <person name="Klein K."/>
            <person name="Koenig J."/>
            <person name="Macko L."/>
            <person name="Mendz G.L."/>
            <person name="Nyakatura G."/>
            <person name="Schauer D.B."/>
            <person name="Shen Z."/>
            <person name="Weber J."/>
            <person name="Frosch M."/>
            <person name="Fox J.G."/>
        </authorList>
    </citation>
    <scope>NUCLEOTIDE SEQUENCE [LARGE SCALE GENOMIC DNA]</scope>
    <source>
        <strain>ATCC 51449 / 3B1</strain>
    </source>
</reference>
<protein>
    <recommendedName>
        <fullName evidence="1">3-isopropylmalate dehydratase small subunit</fullName>
        <ecNumber evidence="1">4.2.1.33</ecNumber>
    </recommendedName>
    <alternativeName>
        <fullName evidence="1">Alpha-IPM isomerase</fullName>
        <shortName evidence="1">IPMI</shortName>
    </alternativeName>
    <alternativeName>
        <fullName evidence="1">Isopropylmalate isomerase</fullName>
    </alternativeName>
</protein>
<dbReference type="EC" id="4.2.1.33" evidence="1"/>
<dbReference type="EMBL" id="AE017125">
    <property type="protein sequence ID" value="AAP77732.1"/>
    <property type="molecule type" value="Genomic_DNA"/>
</dbReference>
<dbReference type="RefSeq" id="WP_011115975.1">
    <property type="nucleotide sequence ID" value="NC_004917.1"/>
</dbReference>
<dbReference type="SMR" id="Q7VH32"/>
<dbReference type="STRING" id="235279.HH_1135"/>
<dbReference type="KEGG" id="hhe:HH_1135"/>
<dbReference type="eggNOG" id="COG0066">
    <property type="taxonomic scope" value="Bacteria"/>
</dbReference>
<dbReference type="HOGENOM" id="CLU_081378_1_1_7"/>
<dbReference type="OrthoDB" id="9777465at2"/>
<dbReference type="UniPathway" id="UPA00048">
    <property type="reaction ID" value="UER00071"/>
</dbReference>
<dbReference type="Proteomes" id="UP000002495">
    <property type="component" value="Chromosome"/>
</dbReference>
<dbReference type="GO" id="GO:0003861">
    <property type="term" value="F:3-isopropylmalate dehydratase activity"/>
    <property type="evidence" value="ECO:0007669"/>
    <property type="project" value="UniProtKB-UniRule"/>
</dbReference>
<dbReference type="GO" id="GO:0009098">
    <property type="term" value="P:L-leucine biosynthetic process"/>
    <property type="evidence" value="ECO:0007669"/>
    <property type="project" value="UniProtKB-UniRule"/>
</dbReference>
<dbReference type="CDD" id="cd01577">
    <property type="entry name" value="IPMI_Swivel"/>
    <property type="match status" value="1"/>
</dbReference>
<dbReference type="FunFam" id="3.20.19.10:FF:000007">
    <property type="entry name" value="Isopropylmalate/citramalate isomerase small subunit"/>
    <property type="match status" value="1"/>
</dbReference>
<dbReference type="Gene3D" id="3.20.19.10">
    <property type="entry name" value="Aconitase, domain 4"/>
    <property type="match status" value="1"/>
</dbReference>
<dbReference type="HAMAP" id="MF_01032">
    <property type="entry name" value="LeuD_type2"/>
    <property type="match status" value="1"/>
</dbReference>
<dbReference type="InterPro" id="IPR015928">
    <property type="entry name" value="Aconitase/3IPM_dehydase_swvl"/>
</dbReference>
<dbReference type="InterPro" id="IPR000573">
    <property type="entry name" value="AconitaseA/IPMdHydase_ssu_swvl"/>
</dbReference>
<dbReference type="InterPro" id="IPR033940">
    <property type="entry name" value="IPMI_Swivel"/>
</dbReference>
<dbReference type="InterPro" id="IPR050075">
    <property type="entry name" value="LeuD"/>
</dbReference>
<dbReference type="InterPro" id="IPR011824">
    <property type="entry name" value="LeuD/DmdB_bac"/>
</dbReference>
<dbReference type="InterPro" id="IPR011827">
    <property type="entry name" value="LeuD_type2/HacB/DmdB"/>
</dbReference>
<dbReference type="NCBIfam" id="TIGR02084">
    <property type="entry name" value="leud"/>
    <property type="match status" value="1"/>
</dbReference>
<dbReference type="NCBIfam" id="TIGR02087">
    <property type="entry name" value="LEUD_arch"/>
    <property type="match status" value="1"/>
</dbReference>
<dbReference type="PANTHER" id="PTHR43345:SF2">
    <property type="entry name" value="3-ISOPROPYLMALATE DEHYDRATASE SMALL SUBUNIT 1"/>
    <property type="match status" value="1"/>
</dbReference>
<dbReference type="PANTHER" id="PTHR43345">
    <property type="entry name" value="3-ISOPROPYLMALATE DEHYDRATASE SMALL SUBUNIT 2-RELATED-RELATED"/>
    <property type="match status" value="1"/>
</dbReference>
<dbReference type="Pfam" id="PF00694">
    <property type="entry name" value="Aconitase_C"/>
    <property type="match status" value="1"/>
</dbReference>
<dbReference type="SUPFAM" id="SSF52016">
    <property type="entry name" value="LeuD/IlvD-like"/>
    <property type="match status" value="1"/>
</dbReference>
<keyword id="KW-0028">Amino-acid biosynthesis</keyword>
<keyword id="KW-0100">Branched-chain amino acid biosynthesis</keyword>
<keyword id="KW-0432">Leucine biosynthesis</keyword>
<keyword id="KW-0456">Lyase</keyword>
<keyword id="KW-1185">Reference proteome</keyword>
<evidence type="ECO:0000255" key="1">
    <source>
        <dbReference type="HAMAP-Rule" id="MF_01032"/>
    </source>
</evidence>
<accession>Q7VH32</accession>
<gene>
    <name evidence="1" type="primary">leuD</name>
    <name type="ordered locus">HH_1135</name>
</gene>
<proteinExistence type="inferred from homology"/>
<name>LEUD_HELHP</name>
<comment type="function">
    <text evidence="1">Catalyzes the isomerization between 2-isopropylmalate and 3-isopropylmalate, via the formation of 2-isopropylmaleate.</text>
</comment>
<comment type="catalytic activity">
    <reaction evidence="1">
        <text>(2R,3S)-3-isopropylmalate = (2S)-2-isopropylmalate</text>
        <dbReference type="Rhea" id="RHEA:32287"/>
        <dbReference type="ChEBI" id="CHEBI:1178"/>
        <dbReference type="ChEBI" id="CHEBI:35121"/>
        <dbReference type="EC" id="4.2.1.33"/>
    </reaction>
</comment>
<comment type="pathway">
    <text evidence="1">Amino-acid biosynthesis; L-leucine biosynthesis; L-leucine from 3-methyl-2-oxobutanoate: step 2/4.</text>
</comment>
<comment type="subunit">
    <text evidence="1">Heterodimer of LeuC and LeuD.</text>
</comment>
<comment type="similarity">
    <text evidence="1">Belongs to the LeuD family. LeuD type 2 subfamily.</text>
</comment>
<feature type="chain" id="PRO_0000141925" description="3-isopropylmalate dehydratase small subunit">
    <location>
        <begin position="1"/>
        <end position="165"/>
    </location>
</feature>
<organism>
    <name type="scientific">Helicobacter hepaticus (strain ATCC 51449 / 3B1)</name>
    <dbReference type="NCBI Taxonomy" id="235279"/>
    <lineage>
        <taxon>Bacteria</taxon>
        <taxon>Pseudomonadati</taxon>
        <taxon>Campylobacterota</taxon>
        <taxon>Epsilonproteobacteria</taxon>
        <taxon>Campylobacterales</taxon>
        <taxon>Helicobacteraceae</taxon>
        <taxon>Helicobacter</taxon>
    </lineage>
</organism>
<sequence>MKAQGFVHKYGDNVDTDVIIPARYLNTADHKELANHCMEDIDKDFVAKVKEGDIMVGGWNFGCGSSREHAPIAIKASGISCIIAKSFARIFYRNAINIGLAIIESEEVAQSLENGDEVAIDFDKGIITNCKNNQQFSTTPFPPFIQEIINANGYLNWISKQKANA</sequence>